<accession>A0A411KUP8</accession>
<evidence type="ECO:0000255" key="1"/>
<evidence type="ECO:0000255" key="2">
    <source>
        <dbReference type="PROSITE-ProRule" id="PRU00258"/>
    </source>
</evidence>
<evidence type="ECO:0000255" key="3">
    <source>
        <dbReference type="PROSITE-ProRule" id="PRU01348"/>
    </source>
</evidence>
<evidence type="ECO:0000255" key="4">
    <source>
        <dbReference type="PROSITE-ProRule" id="PRU01363"/>
    </source>
</evidence>
<evidence type="ECO:0000256" key="5">
    <source>
        <dbReference type="SAM" id="MobiDB-lite"/>
    </source>
</evidence>
<evidence type="ECO:0000269" key="6">
    <source>
    </source>
</evidence>
<evidence type="ECO:0000303" key="7">
    <source>
    </source>
</evidence>
<evidence type="ECO:0000305" key="8"/>
<evidence type="ECO:0000305" key="9">
    <source>
    </source>
</evidence>
<proteinExistence type="evidence at protein level"/>
<dbReference type="EC" id="2.3.1.-" evidence="6"/>
<dbReference type="EC" id="6.3.2.-" evidence="6"/>
<dbReference type="EMBL" id="MH375764">
    <property type="protein sequence ID" value="QBC88145.1"/>
    <property type="molecule type" value="Genomic_DNA"/>
</dbReference>
<dbReference type="SMR" id="A0A411KUP8"/>
<dbReference type="GO" id="GO:0004312">
    <property type="term" value="F:fatty acid synthase activity"/>
    <property type="evidence" value="ECO:0007669"/>
    <property type="project" value="TreeGrafter"/>
</dbReference>
<dbReference type="GO" id="GO:0016874">
    <property type="term" value="F:ligase activity"/>
    <property type="evidence" value="ECO:0007669"/>
    <property type="project" value="UniProtKB-KW"/>
</dbReference>
<dbReference type="GO" id="GO:0016491">
    <property type="term" value="F:oxidoreductase activity"/>
    <property type="evidence" value="ECO:0007669"/>
    <property type="project" value="UniProtKB-KW"/>
</dbReference>
<dbReference type="GO" id="GO:0031177">
    <property type="term" value="F:phosphopantetheine binding"/>
    <property type="evidence" value="ECO:0007669"/>
    <property type="project" value="InterPro"/>
</dbReference>
<dbReference type="GO" id="GO:0008757">
    <property type="term" value="F:S-adenosylmethionine-dependent methyltransferase activity"/>
    <property type="evidence" value="ECO:0007669"/>
    <property type="project" value="InterPro"/>
</dbReference>
<dbReference type="GO" id="GO:0017000">
    <property type="term" value="P:antibiotic biosynthetic process"/>
    <property type="evidence" value="ECO:0007669"/>
    <property type="project" value="UniProtKB-KW"/>
</dbReference>
<dbReference type="GO" id="GO:0006633">
    <property type="term" value="P:fatty acid biosynthetic process"/>
    <property type="evidence" value="ECO:0007669"/>
    <property type="project" value="TreeGrafter"/>
</dbReference>
<dbReference type="GO" id="GO:0032259">
    <property type="term" value="P:methylation"/>
    <property type="evidence" value="ECO:0007669"/>
    <property type="project" value="UniProtKB-KW"/>
</dbReference>
<dbReference type="GO" id="GO:0044550">
    <property type="term" value="P:secondary metabolite biosynthetic process"/>
    <property type="evidence" value="ECO:0007669"/>
    <property type="project" value="TreeGrafter"/>
</dbReference>
<dbReference type="CDD" id="cd02440">
    <property type="entry name" value="AdoMet_MTases"/>
    <property type="match status" value="1"/>
</dbReference>
<dbReference type="CDD" id="cd19532">
    <property type="entry name" value="C_PKS-NRPS"/>
    <property type="match status" value="1"/>
</dbReference>
<dbReference type="CDD" id="cd00833">
    <property type="entry name" value="PKS"/>
    <property type="match status" value="1"/>
</dbReference>
<dbReference type="Gene3D" id="3.30.300.30">
    <property type="match status" value="1"/>
</dbReference>
<dbReference type="Gene3D" id="3.30.70.3290">
    <property type="match status" value="1"/>
</dbReference>
<dbReference type="Gene3D" id="3.40.47.10">
    <property type="match status" value="1"/>
</dbReference>
<dbReference type="Gene3D" id="1.10.1200.10">
    <property type="entry name" value="ACP-like"/>
    <property type="match status" value="1"/>
</dbReference>
<dbReference type="Gene3D" id="3.30.559.10">
    <property type="entry name" value="Chloramphenicol acetyltransferase-like domain"/>
    <property type="match status" value="1"/>
</dbReference>
<dbReference type="Gene3D" id="3.40.366.10">
    <property type="entry name" value="Malonyl-Coenzyme A Acyl Carrier Protein, domain 2"/>
    <property type="match status" value="1"/>
</dbReference>
<dbReference type="Gene3D" id="3.40.50.12780">
    <property type="entry name" value="N-terminal domain of ligase-like"/>
    <property type="match status" value="1"/>
</dbReference>
<dbReference type="Gene3D" id="3.40.50.720">
    <property type="entry name" value="NAD(P)-binding Rossmann-like Domain"/>
    <property type="match status" value="2"/>
</dbReference>
<dbReference type="Gene3D" id="3.30.559.30">
    <property type="entry name" value="Nonribosomal peptide synthetase, condensation domain"/>
    <property type="match status" value="1"/>
</dbReference>
<dbReference type="Gene3D" id="3.10.129.110">
    <property type="entry name" value="Polyketide synthase dehydratase"/>
    <property type="match status" value="1"/>
</dbReference>
<dbReference type="Gene3D" id="3.40.50.150">
    <property type="entry name" value="Vaccinia Virus protein VP39"/>
    <property type="match status" value="1"/>
</dbReference>
<dbReference type="InterPro" id="IPR001227">
    <property type="entry name" value="Ac_transferase_dom_sf"/>
</dbReference>
<dbReference type="InterPro" id="IPR036736">
    <property type="entry name" value="ACP-like_sf"/>
</dbReference>
<dbReference type="InterPro" id="IPR014043">
    <property type="entry name" value="Acyl_transferase_dom"/>
</dbReference>
<dbReference type="InterPro" id="IPR016035">
    <property type="entry name" value="Acyl_Trfase/lysoPLipase"/>
</dbReference>
<dbReference type="InterPro" id="IPR045851">
    <property type="entry name" value="AMP-bd_C_sf"/>
</dbReference>
<dbReference type="InterPro" id="IPR020845">
    <property type="entry name" value="AMP-binding_CS"/>
</dbReference>
<dbReference type="InterPro" id="IPR000873">
    <property type="entry name" value="AMP-dep_synth/lig_dom"/>
</dbReference>
<dbReference type="InterPro" id="IPR042099">
    <property type="entry name" value="ANL_N_sf"/>
</dbReference>
<dbReference type="InterPro" id="IPR023213">
    <property type="entry name" value="CAT-like_dom_sf"/>
</dbReference>
<dbReference type="InterPro" id="IPR001242">
    <property type="entry name" value="Condensatn"/>
</dbReference>
<dbReference type="InterPro" id="IPR013120">
    <property type="entry name" value="Far_NAD-bd"/>
</dbReference>
<dbReference type="InterPro" id="IPR014031">
    <property type="entry name" value="Ketoacyl_synth_C"/>
</dbReference>
<dbReference type="InterPro" id="IPR014030">
    <property type="entry name" value="Ketoacyl_synth_N"/>
</dbReference>
<dbReference type="InterPro" id="IPR016036">
    <property type="entry name" value="Malonyl_transacylase_ACP-bd"/>
</dbReference>
<dbReference type="InterPro" id="IPR013216">
    <property type="entry name" value="Methyltransf_11"/>
</dbReference>
<dbReference type="InterPro" id="IPR036291">
    <property type="entry name" value="NAD(P)-bd_dom_sf"/>
</dbReference>
<dbReference type="InterPro" id="IPR032821">
    <property type="entry name" value="PKS_assoc"/>
</dbReference>
<dbReference type="InterPro" id="IPR020841">
    <property type="entry name" value="PKS_Beta-ketoAc_synthase_dom"/>
</dbReference>
<dbReference type="InterPro" id="IPR042104">
    <property type="entry name" value="PKS_dehydratase_sf"/>
</dbReference>
<dbReference type="InterPro" id="IPR020807">
    <property type="entry name" value="PKS_DH"/>
</dbReference>
<dbReference type="InterPro" id="IPR049551">
    <property type="entry name" value="PKS_DH_C"/>
</dbReference>
<dbReference type="InterPro" id="IPR049552">
    <property type="entry name" value="PKS_DH_N"/>
</dbReference>
<dbReference type="InterPro" id="IPR013968">
    <property type="entry name" value="PKS_KR"/>
</dbReference>
<dbReference type="InterPro" id="IPR049900">
    <property type="entry name" value="PKS_mFAS_DH"/>
</dbReference>
<dbReference type="InterPro" id="IPR050091">
    <property type="entry name" value="PKS_NRPS_Biosynth_Enz"/>
</dbReference>
<dbReference type="InterPro" id="IPR020806">
    <property type="entry name" value="PKS_PP-bd"/>
</dbReference>
<dbReference type="InterPro" id="IPR009081">
    <property type="entry name" value="PP-bd_ACP"/>
</dbReference>
<dbReference type="InterPro" id="IPR006162">
    <property type="entry name" value="Ppantetheine_attach_site"/>
</dbReference>
<dbReference type="InterPro" id="IPR029063">
    <property type="entry name" value="SAM-dependent_MTases_sf"/>
</dbReference>
<dbReference type="InterPro" id="IPR016039">
    <property type="entry name" value="Thiolase-like"/>
</dbReference>
<dbReference type="PANTHER" id="PTHR43775">
    <property type="entry name" value="FATTY ACID SYNTHASE"/>
    <property type="match status" value="1"/>
</dbReference>
<dbReference type="PANTHER" id="PTHR43775:SF20">
    <property type="entry name" value="HYBRID PKS-NRPS SYNTHETASE APDA"/>
    <property type="match status" value="1"/>
</dbReference>
<dbReference type="Pfam" id="PF00698">
    <property type="entry name" value="Acyl_transf_1"/>
    <property type="match status" value="1"/>
</dbReference>
<dbReference type="Pfam" id="PF00501">
    <property type="entry name" value="AMP-binding"/>
    <property type="match status" value="1"/>
</dbReference>
<dbReference type="Pfam" id="PF00668">
    <property type="entry name" value="Condensation"/>
    <property type="match status" value="1"/>
</dbReference>
<dbReference type="Pfam" id="PF16197">
    <property type="entry name" value="KAsynt_C_assoc"/>
    <property type="match status" value="1"/>
</dbReference>
<dbReference type="Pfam" id="PF00109">
    <property type="entry name" value="ketoacyl-synt"/>
    <property type="match status" value="1"/>
</dbReference>
<dbReference type="Pfam" id="PF02801">
    <property type="entry name" value="Ketoacyl-synt_C"/>
    <property type="match status" value="1"/>
</dbReference>
<dbReference type="Pfam" id="PF08659">
    <property type="entry name" value="KR"/>
    <property type="match status" value="1"/>
</dbReference>
<dbReference type="Pfam" id="PF08241">
    <property type="entry name" value="Methyltransf_11"/>
    <property type="match status" value="1"/>
</dbReference>
<dbReference type="Pfam" id="PF07993">
    <property type="entry name" value="NAD_binding_4"/>
    <property type="match status" value="1"/>
</dbReference>
<dbReference type="Pfam" id="PF21089">
    <property type="entry name" value="PKS_DH_N"/>
    <property type="match status" value="1"/>
</dbReference>
<dbReference type="Pfam" id="PF00550">
    <property type="entry name" value="PP-binding"/>
    <property type="match status" value="1"/>
</dbReference>
<dbReference type="Pfam" id="PF14765">
    <property type="entry name" value="PS-DH"/>
    <property type="match status" value="1"/>
</dbReference>
<dbReference type="SMART" id="SM00827">
    <property type="entry name" value="PKS_AT"/>
    <property type="match status" value="1"/>
</dbReference>
<dbReference type="SMART" id="SM00826">
    <property type="entry name" value="PKS_DH"/>
    <property type="match status" value="1"/>
</dbReference>
<dbReference type="SMART" id="SM00822">
    <property type="entry name" value="PKS_KR"/>
    <property type="match status" value="1"/>
</dbReference>
<dbReference type="SMART" id="SM00825">
    <property type="entry name" value="PKS_KS"/>
    <property type="match status" value="1"/>
</dbReference>
<dbReference type="SMART" id="SM00823">
    <property type="entry name" value="PKS_PP"/>
    <property type="match status" value="2"/>
</dbReference>
<dbReference type="SUPFAM" id="SSF56801">
    <property type="entry name" value="Acetyl-CoA synthetase-like"/>
    <property type="match status" value="1"/>
</dbReference>
<dbReference type="SUPFAM" id="SSF47336">
    <property type="entry name" value="ACP-like"/>
    <property type="match status" value="2"/>
</dbReference>
<dbReference type="SUPFAM" id="SSF52777">
    <property type="entry name" value="CoA-dependent acyltransferases"/>
    <property type="match status" value="2"/>
</dbReference>
<dbReference type="SUPFAM" id="SSF52151">
    <property type="entry name" value="FabD/lysophospholipase-like"/>
    <property type="match status" value="1"/>
</dbReference>
<dbReference type="SUPFAM" id="SSF51735">
    <property type="entry name" value="NAD(P)-binding Rossmann-fold domains"/>
    <property type="match status" value="2"/>
</dbReference>
<dbReference type="SUPFAM" id="SSF55048">
    <property type="entry name" value="Probable ACP-binding domain of malonyl-CoA ACP transacylase"/>
    <property type="match status" value="1"/>
</dbReference>
<dbReference type="SUPFAM" id="SSF53335">
    <property type="entry name" value="S-adenosyl-L-methionine-dependent methyltransferases"/>
    <property type="match status" value="1"/>
</dbReference>
<dbReference type="SUPFAM" id="SSF53901">
    <property type="entry name" value="Thiolase-like"/>
    <property type="match status" value="1"/>
</dbReference>
<dbReference type="PROSITE" id="PS00455">
    <property type="entry name" value="AMP_BINDING"/>
    <property type="match status" value="1"/>
</dbReference>
<dbReference type="PROSITE" id="PS50075">
    <property type="entry name" value="CARRIER"/>
    <property type="match status" value="2"/>
</dbReference>
<dbReference type="PROSITE" id="PS52004">
    <property type="entry name" value="KS3_2"/>
    <property type="match status" value="1"/>
</dbReference>
<dbReference type="PROSITE" id="PS00012">
    <property type="entry name" value="PHOSPHOPANTETHEINE"/>
    <property type="match status" value="1"/>
</dbReference>
<dbReference type="PROSITE" id="PS52019">
    <property type="entry name" value="PKS_MFAS_DH"/>
    <property type="match status" value="1"/>
</dbReference>
<keyword id="KW-0045">Antibiotic biosynthesis</keyword>
<keyword id="KW-0436">Ligase</keyword>
<keyword id="KW-0489">Methyltransferase</keyword>
<keyword id="KW-0511">Multifunctional enzyme</keyword>
<keyword id="KW-0560">Oxidoreductase</keyword>
<keyword id="KW-0596">Phosphopantetheine</keyword>
<keyword id="KW-0597">Phosphoprotein</keyword>
<keyword id="KW-0677">Repeat</keyword>
<keyword id="KW-0808">Transferase</keyword>
<organism>
    <name type="scientific">Acremonium sp</name>
    <dbReference type="NCBI Taxonomy" id="2046025"/>
    <lineage>
        <taxon>Eukaryota</taxon>
        <taxon>Fungi</taxon>
        <taxon>Dikarya</taxon>
        <taxon>Ascomycota</taxon>
        <taxon>Pezizomycotina</taxon>
        <taxon>Sordariomycetes</taxon>
        <taxon>Hypocreomycetidae</taxon>
        <taxon>Hypocreales</taxon>
        <taxon>Hypocreales incertae sedis</taxon>
        <taxon>Acremonium</taxon>
    </lineage>
</organism>
<reference key="1">
    <citation type="journal article" date="2018" name="J. Am. Chem. Soc.">
        <title>Genome mining and assembly-line biosynthesis of the UCS1025A pyrrolizidinone family of fungal alkaloids.</title>
        <authorList>
            <person name="Li L."/>
            <person name="Tang M.C."/>
            <person name="Tang S."/>
            <person name="Gao S."/>
            <person name="Soliman S."/>
            <person name="Hang L."/>
            <person name="Xu W."/>
            <person name="Ye T."/>
            <person name="Watanabe K."/>
            <person name="Tang Y."/>
        </authorList>
    </citation>
    <scope>NUCLEOTIDE SEQUENCE [GENOMIC DNA]</scope>
    <scope>FUNCTION</scope>
    <scope>DISRUPTION PHENOTYPE</scope>
    <scope>CATALYTIC ACTIVITY</scope>
    <scope>PATHWAY</scope>
    <source>
        <strain>KY4917</strain>
    </source>
</reference>
<gene>
    <name evidence="7" type="primary">ucsA</name>
</gene>
<comment type="function">
    <text evidence="6 9">Hybrid PKS-NRPS synthetase; part of the gene cluster that mediates the biosynthesis of UCS1025A, a member of the pyrrolizidinone family that acts as a strong telomerase inhibitor and displays potent antibacterial and antitumor properties (PubMed:29373009). These compounds share a hemiaminal-containing pyrrolizidinone core fused with a gamma-lactone, giving a furopyrrolizidine that is connected to a decalin fragment (PubMed:29373009). The polyketide synthase module (PKS) of the PKS-NRPS ucsA is responsible for the synthesis of the polyketide backbone via the condensation of an acetyl-CoA starter unit with 6 malonyl-CoA units (PubMed:29373009). The downstream nonribosomal peptide synthetase (NRPS) module then amidates the carboxyl end of the polyketide with a 2S,3S-methylproline derived from L-isoleucine by the 2-oxoglutarate-dependent dioxygenase ucsF which converts L-isoleucine to (4S,5S)-4-methylpyrroline-5-carboxylate that is further converted to 2S,3S-methylproline by the pyrroline-5-carboxylate reductase ucsG (PubMed:29373009). Reductive release of the completed aminoacyl polyketide from the assembly line can form the 3-pyrrolin-2-one structure via an intramolecular Knoevenagel reaction (PubMed:29373009). Because ucsA lacks a designated enoylreductase (ER) domain, the required activity is provided the enoyl reductase ucsL (PubMed:29373009). This keto acyclic precursor is the substrate of the Diels-Alderase ucsH, that catalyzes the Diels-Alder cycloaddition (PubMed:29373009). Oxidation of the 3S-methyl group to a carboxylate by the cytochrome P450 monooxygenase ucsK allows an oxa-Michael cyclization that might involve the reductase/dehydrogenase ucsI and which furnishes the furopyrrolizidine (PubMed:29373009). The oxidase ucsJ likely plays a critical role in stereoselective reduction of the C5-C6 double bond to afford the required R-configured carboxylate group (Probable). Further enolization and oxidation at C5 by an unidentified enzyme affords the last intermediate that can undergo oxa-Michael cyclization to yield UCS1025A (Probable).</text>
</comment>
<comment type="pathway">
    <text evidence="6">Mycotoxin biosynthesis.</text>
</comment>
<comment type="domain">
    <text evidence="9">NRP synthetases are composed of discrete domains (adenylation (A), thiolation (T) or peptidyl carrier protein (PCP) and condensation (C) domains) which when grouped together are referred to as a single module. Each module is responsible for the recognition (via the A domain) and incorporation of a single amino acid into the growing peptide product. Thus, an NRP synthetase is generally composed of one or more modules and can terminate in a thioesterase domain (TE) that releases the newly synthesized peptide from the enzyme. Occasionally, epimerase (E) domains (responsible for L- to D-amino acid conversion) are present within the NRP synthetase (Probable). UcsA also contains a polyketide synthase module (PKS) consisting of several catalytic domains including a ketoacyl synthase domain (KS), an acyl transferase domain (AT), a dehydratase domain (DH), a methyltransferase domain (MT), and a ketoreductase domain (KR) (Probable). Instead of a thioesterase domain (TE), buaA finishes with a reductase-like domain (R) for peptide release. UcsA has the following architecture: KS-AT-DH-KR-PCP-C-A-T-R (Probable).</text>
</comment>
<comment type="disruption phenotype">
    <text evidence="6">Abolishes the production of UCS1025A.</text>
</comment>
<comment type="similarity">
    <text evidence="8">In the C-terminal section; belongs to the NRP synthetase family.</text>
</comment>
<feature type="chain" id="PRO_0000450530" description="Hybrid PKS-NRPS synthetase ucsA">
    <location>
        <begin position="1"/>
        <end position="3948"/>
    </location>
</feature>
<feature type="domain" description="Ketosynthase family 3 (KS3)" evidence="3 9">
    <location>
        <begin position="11"/>
        <end position="440"/>
    </location>
</feature>
<feature type="domain" description="PKS/mFAS DH" evidence="4">
    <location>
        <begin position="940"/>
        <end position="1256"/>
    </location>
</feature>
<feature type="domain" description="Carrier 1" evidence="2 9">
    <location>
        <begin position="2275"/>
        <end position="2357"/>
    </location>
</feature>
<feature type="domain" description="Carrier 2" evidence="2 9">
    <location>
        <begin position="3513"/>
        <end position="3592"/>
    </location>
</feature>
<feature type="region of interest" description="Malonyl-CoA:ACP transacylase (MAT) domain" evidence="1 9">
    <location>
        <begin position="548"/>
        <end position="881"/>
    </location>
</feature>
<feature type="region of interest" description="Dehydratase (DH) domain" evidence="1 9">
    <location>
        <begin position="940"/>
        <end position="1254"/>
    </location>
</feature>
<feature type="region of interest" description="N-terminal hotdog fold" evidence="4">
    <location>
        <begin position="940"/>
        <end position="1079"/>
    </location>
</feature>
<feature type="region of interest" description="C-terminal hotdog fold" evidence="4">
    <location>
        <begin position="1098"/>
        <end position="1256"/>
    </location>
</feature>
<feature type="region of interest" description="Methyltransferase (MT) domain" evidence="1 9">
    <location>
        <begin position="1299"/>
        <end position="1460"/>
    </location>
</feature>
<feature type="region of interest" description="Ketoreductase (KR) domain" evidence="1 9">
    <location>
        <begin position="1989"/>
        <end position="2165"/>
    </location>
</feature>
<feature type="region of interest" description="Disordered" evidence="5">
    <location>
        <begin position="2381"/>
        <end position="2473"/>
    </location>
</feature>
<feature type="region of interest" description="Condensation (C) domain" evidence="1 9">
    <location>
        <begin position="2489"/>
        <end position="2926"/>
    </location>
</feature>
<feature type="region of interest" description="Adenylation (A) (KR) domain" evidence="1 9">
    <location>
        <begin position="2950"/>
        <end position="3355"/>
    </location>
</feature>
<feature type="region of interest" description="Disordered" evidence="5">
    <location>
        <begin position="3483"/>
        <end position="3507"/>
    </location>
</feature>
<feature type="region of interest" description="Reductase (R) domain" evidence="1 9">
    <location>
        <begin position="3633"/>
        <end position="3852"/>
    </location>
</feature>
<feature type="compositionally biased region" description="Low complexity" evidence="5">
    <location>
        <begin position="2381"/>
        <end position="2404"/>
    </location>
</feature>
<feature type="compositionally biased region" description="Polar residues" evidence="5">
    <location>
        <begin position="2405"/>
        <end position="2418"/>
    </location>
</feature>
<feature type="compositionally biased region" description="Polar residues" evidence="5">
    <location>
        <begin position="2426"/>
        <end position="2437"/>
    </location>
</feature>
<feature type="compositionally biased region" description="Low complexity" evidence="5">
    <location>
        <begin position="2441"/>
        <end position="2456"/>
    </location>
</feature>
<feature type="compositionally biased region" description="Polar residues" evidence="5">
    <location>
        <begin position="2462"/>
        <end position="2473"/>
    </location>
</feature>
<feature type="active site" description="For beta-ketoacyl synthase activity" evidence="3">
    <location>
        <position position="184"/>
    </location>
</feature>
<feature type="active site" description="For beta-ketoacyl synthase activity" evidence="3">
    <location>
        <position position="323"/>
    </location>
</feature>
<feature type="active site" description="For beta-ketoacyl synthase activity" evidence="3">
    <location>
        <position position="363"/>
    </location>
</feature>
<feature type="active site" description="Proton acceptor; for dehydratase activity" evidence="4">
    <location>
        <position position="972"/>
    </location>
</feature>
<feature type="active site" description="Proton donor; for dehydratase activity" evidence="4">
    <location>
        <position position="1161"/>
    </location>
</feature>
<feature type="modified residue" description="O-(pantetheine 4'-phosphoryl)serine" evidence="2">
    <location>
        <position position="2317"/>
    </location>
</feature>
<feature type="modified residue" description="O-(pantetheine 4'-phosphoryl)serine" evidence="2">
    <location>
        <position position="3552"/>
    </location>
</feature>
<protein>
    <recommendedName>
        <fullName evidence="7">Hybrid PKS-NRPS synthetase ucsA</fullName>
        <ecNumber evidence="6">2.3.1.-</ecNumber>
        <ecNumber evidence="6">6.3.2.-</ecNumber>
    </recommendedName>
    <alternativeName>
        <fullName evidence="7">UCS1025A pyrrolizidinone biosynthesis cluster protein A</fullName>
    </alternativeName>
</protein>
<sequence>MGPPSQATAANEPIAVIGSGCRFPGSASSPSKLWQLLSQPRDVLSEIPKSRFDPHGFYNKNGETGGHSNVLHSYVLDEDIRAWDADFFKVSASEAAAIDPQQRLLMETVYEALEAGGQQIHALRGSDTAVYVGLMGEEYSDIQGRELDMMPTYHATGTARSIVSNRISYFFDWHGASMTIDTACSSSLVAVHQCVQAIRSGYSRVAVAAGTNLCLGPEPYISESTFHMLSPRGRSHMWDASADGYGRGEGVAAVILKKLSDAIADGDHIECVIRETGVNQDGRTNGITVPSPDAQVALIQDTYRRAGLDLARPEDQPQFFEAHGTGTGAGDPLEAEAIYRAIGTRMAEGKRLYVGSIKTIIGHTEGTAGIAGLMKASLALQNRTIPPNMLFNTLNPKIEPFIKKLQIPQEPRDWPDVPVKRASVNSFGFGGTNAHAILERYEPDAYRQAEGGDAAFAGPYTFSAVSKTSLKQMLVNTLEFLDDNPAVKPRDLAYTLNSRRSTFTFRTSFAGRDVDALRKRITASIESPDWESQAVIRPAKQPLKILGIFTGQGAQWPGMGKQLLDSSPSAQARIQELELALATLQPGDRPCWSLKAELLAEGSKSRLSQAEFAQPLCTALQILLIDLLTAAGVQFSAVVGHSSGEIGAAYAAGVLSARDAIVVAYYRGVHTKLARGDGDQPGAMLAAGTTFEDAQDLVSLPELEGRIAIAACNSPSSVTLSGDADAIEAAVEMLSDEQKFARTLRVDKAYHSHHMRPCSEPYVNSLRRAGVAARDPRPETKWFSSVHAGRVLTSAAAEQLSDTYWALNMAQTVLFSAAVEEAVASEQYTAAIEVGPHGTLKGPAIDTIKAAGRPVPTYLSCLARNMDSLDTFSTAIGQLWATSPEGSLDLERYSITAFGPSQGANSPLKGFPSYPWDNKRRFWSESRRSRAFRLRPEPGHPLLGTLGADSTATDWSWHNVLRLTSLPWVNGHQLQGQTVWPAAGYVALAVEAANQLAKGHGGLSHIIELEDLDIGKAIAFENDKAGVELLFSLHVNNITVVNGQKVLEAGFSSRSSVGEASTEAALNASGHIRLTITDFESPEPSPALPVQDSARIAMTEVDQNLFYNELKVLGYNYTGPFRALHSLSRKLDHGRGRLARVSKSDMHDSERGLLVHPGYLDAAFQAMFLAYAYPGDGQIWSLHVPVSIGRIRIDATQSRANADSYLTFDSATNAVSQNNGQRGLAGDVNIFSADGQTGLVQVENIRLIPFAAASEANDAQVYYHNVWNTATPDGLLASEAFKAGEGVAQEGLGQAAGILAHVVGQITHINPHARLLQIGDESHEVAQRVLGKIGGAFSHYTLTSPSPDAVEEARDALHAKSRHLGFMELRPNEDFVAQGLREQSFEVAISALAAHTVQDAEAYIKKIHQVLRPGGYLLMLEPTLDSLRGSLSGKGKGTRGIPTAEWHSLLLRAGFTGVETSASDSDRSGPPFNVLVSRAANDHVNLLLEPSTIPSPEARAEHTLIVSGRSLASVRLAETMRRLLTPHTDRISVVSTVGDLTSLDLSVRPVVLYLADLDEPVFSHYTAEAHAGLQALWTTAQTVLWTTRGAQKHDPHSLQSIGFGRAMAVEHAHAKLNAQFFDFAPGARVDPHALLDDLLRLQILGKRSSNTQGDFVWTKEPEIQVDELGRRWIPRLVPHSDFNNGYNAARRSIVADADPSRHVVEVVSSRNSDGSLQRSLLRLTVPRTANVDSQEPLTKLRVLYTAETPFHPPSSAQLYASIGLDVTTSKPFVALSSTISSIIEVPTSSLIEYNHRLAEGPAHLHGITTSMLASLIIRTAKQDAATVLLEPSRELVSLLSKDAAAQDLKLAFVTASPATPKSESIHLGAYSTDSAIRRALSFNIASVLDFTNRGSWSERILKQLAPDVIVESADSFRAHGLAPAEIIEAFRSFIDAAPIAVQDHELVSADDFVASQRSSPSILDWAGSSTVSVSVQTPDSQPIFRGDRTYILFGLAGAGGLGLPLAEYMASLGARYIVLTSRNPEVDQDLVAEYASRGVHLRFMANDITNENQVSNLVSEIRASWPPIAGVANGANVLNDMQFKDMTHDDMVKVLRPKVEGSKTLDRLFFDDPLEFFIGFSSISIVFGRSGQSNYDAANIFMLGLASQRRARGLNASVIDIGPISGVGLMARDVSENVMGLLVNHGYRKMSGRDFLQLFLNGITCGRVESGEPEELITGLTVHPKNGDFKPTWTDNARFSHLFLNTDDSSGSSADGTGQMESIQDLLLRSSTKNDVARVLRHAILNKMQNVLSLSDESVLDSESLLQRDTSSLGLDSLLAVELRTWMLGELEVDLPVLKILSDTPIQGLVDFAVDNLPPALAPSVTPEGKDSITEEDLTAPKAKTDAPAAAPTPASATAPGSKSDGNVSSIARSADQSPSHKDTLPQPTAILTNATAGTKPVSPSLSVTGSTSSAAGDDETPTSSQAASLESSQVIDSRPVIDYKPVIEKTLPMSYGQSRFWVMNQIVQDPTAFNITCDIEISSEVDKAVLSRAVDIIGARHEALRTCFLNDENHEPIQAVMNTSTLRLEVVSDDQSQVDSYFEQVKKTVYDLSNGYLMRALLVSTSKTSHHLIVGYHHVNMDSTSFVVFMSDLLKIYAGQTLSPPKVQYPDFAQYQLQRLRNGQWASHINYWTREFAKLPDPLPLLSISPKASRPRPYLTNYQNIDAETRVSATVARQIQSTSRRLKVTPFHVYTTVLQIVLARLSGTDDVCIGMADANRTDIGAIDSIGNFLNLLPLRLTTDAKQSFETLVKVTKNKILHALSHSAVPFDVILEKVGVQRSPTHSPLFQAFIDYRHVTEKLPFGTGFLEGKRYAVSETPYDIMVEMIDTPTGEASLKILVQEALYTSEDAQTIMDCYINLLDAVTKDDRQAVGKPQIFNSSKVQKALELGQGETLNLQHATILPELDDIAAVQPTLTALQDSIGGSLSWSEMKAKSIAIGRNLDQLRLAPQSRVGVFQAPEVDWVCSMLGVWRSGHIYVPLETTQGIKRLSDVAQQARLDAILLHDPTVSLFSQLSLPNPLPTINVSAVPFAHLTDQRHFSTLKPDDQAMIVYTSGSTGVPKGITIAHRVVVNAVRSFLHRWPMTPQTVLQQTALSFDVSWWATVVGLATKGSVVVAGSDSRRDPRALTDLIVSKDITFTFAVPSESVSWLESGNADALRASSWAYHCSGGEPYSLNLIDKLKTLNKPDLTAINIYGPTETMIPNAHVVEYRTLTADDLPVPIGTTMPNYLARVVDLEGHPVPAGVPGELIFVGPGIASGYVDNAALTAERFPKDSLAGPEYVKNGWDVAHNSGDHGYLDGKTGEFVLQARIKGDTQVKLRGLRIDMQDVEANILTASNRQITDAIVHVRKPELNNPSADFLLAHVVLSREARLRYPTPADQSAFFRDIVRDLRVPDYMRPALVVALDSLPLTHHGKADRRAIANLPLDQIASQLQKEPVPLTNKGGLKETPVARPTRYQNDPIPRQVLSSSPFSSLDQVKDLWLDILGTAVNAHTLDPESDFFLVGGNSLLLIRIQGELRKRAGLDVPLTQLFQNSTLGQMASLLDGKDRAKQQGASGIDWVSEIKIQPNLARLRANRAPLPQDGLVMALTGATGFLGLELTRRLIDLPNVRTVHALSVRDSRKLSQLQSPKLVVHSGDLSRPSLGMDSGVLAQIFKTSHVVIHNGADVSFLKSYGSVRATNLESTKEIAKLALQHNNVRALHYVSTAGIATMLSHDLYEESIGSFPPSSSPEGYVLTKWAAELYLERVAAVTNLPVTIHRPTAIVGENAPHLDVMSNILHYSQKLNTVPSMTALEGTFQFVPVEDVANGLVGRVVAGHSSTLSAVEYQNHNGAIEDTVDVHGLAPYLSNKHGRSVTVTPDAEWIALASRAGMADEVVQYMGGVNMSDRKGEKWRFPRALNGSKP</sequence>
<name>UCSA_ACRSP</name>